<protein>
    <recommendedName>
        <fullName evidence="2">Translation initiation factor IF-2</fullName>
    </recommendedName>
</protein>
<feature type="chain" id="PRO_0000137196" description="Translation initiation factor IF-2">
    <location>
        <begin position="1"/>
        <end position="964"/>
    </location>
</feature>
<feature type="domain" description="tr-type G">
    <location>
        <begin position="459"/>
        <end position="631"/>
    </location>
</feature>
<feature type="region of interest" description="Disordered" evidence="3">
    <location>
        <begin position="35"/>
        <end position="353"/>
    </location>
</feature>
<feature type="region of interest" description="G1" evidence="1">
    <location>
        <begin position="468"/>
        <end position="475"/>
    </location>
</feature>
<feature type="region of interest" description="G2" evidence="1">
    <location>
        <begin position="493"/>
        <end position="497"/>
    </location>
</feature>
<feature type="region of interest" description="G3" evidence="1">
    <location>
        <begin position="518"/>
        <end position="521"/>
    </location>
</feature>
<feature type="region of interest" description="G4" evidence="1">
    <location>
        <begin position="572"/>
        <end position="575"/>
    </location>
</feature>
<feature type="region of interest" description="G5" evidence="1">
    <location>
        <begin position="608"/>
        <end position="610"/>
    </location>
</feature>
<feature type="compositionally biased region" description="Low complexity" evidence="3">
    <location>
        <begin position="64"/>
        <end position="108"/>
    </location>
</feature>
<feature type="compositionally biased region" description="Pro residues" evidence="3">
    <location>
        <begin position="124"/>
        <end position="133"/>
    </location>
</feature>
<feature type="compositionally biased region" description="Basic and acidic residues" evidence="3">
    <location>
        <begin position="145"/>
        <end position="155"/>
    </location>
</feature>
<feature type="compositionally biased region" description="Pro residues" evidence="3">
    <location>
        <begin position="166"/>
        <end position="178"/>
    </location>
</feature>
<feature type="compositionally biased region" description="Low complexity" evidence="3">
    <location>
        <begin position="220"/>
        <end position="233"/>
    </location>
</feature>
<feature type="compositionally biased region" description="Gly residues" evidence="3">
    <location>
        <begin position="234"/>
        <end position="252"/>
    </location>
</feature>
<feature type="compositionally biased region" description="Gly residues" evidence="3">
    <location>
        <begin position="290"/>
        <end position="333"/>
    </location>
</feature>
<feature type="compositionally biased region" description="Basic residues" evidence="3">
    <location>
        <begin position="337"/>
        <end position="346"/>
    </location>
</feature>
<feature type="binding site" evidence="2">
    <location>
        <begin position="468"/>
        <end position="475"/>
    </location>
    <ligand>
        <name>GTP</name>
        <dbReference type="ChEBI" id="CHEBI:37565"/>
    </ligand>
</feature>
<feature type="binding site" evidence="2">
    <location>
        <begin position="518"/>
        <end position="522"/>
    </location>
    <ligand>
        <name>GTP</name>
        <dbReference type="ChEBI" id="CHEBI:37565"/>
    </ligand>
</feature>
<feature type="binding site" evidence="2">
    <location>
        <begin position="572"/>
        <end position="575"/>
    </location>
    <ligand>
        <name>GTP</name>
        <dbReference type="ChEBI" id="CHEBI:37565"/>
    </ligand>
</feature>
<proteinExistence type="inferred from homology"/>
<comment type="function">
    <text evidence="2">One of the essential components for the initiation of protein synthesis. Protects formylmethionyl-tRNA from spontaneous hydrolysis and promotes its binding to the 30S ribosomal subunits. Also involved in the hydrolysis of GTP during the formation of the 70S ribosomal complex.</text>
</comment>
<comment type="subcellular location">
    <subcellularLocation>
        <location evidence="2">Cytoplasm</location>
    </subcellularLocation>
</comment>
<comment type="similarity">
    <text evidence="2">Belongs to the TRAFAC class translation factor GTPase superfamily. Classic translation factor GTPase family. IF-2 subfamily.</text>
</comment>
<dbReference type="EMBL" id="BA000035">
    <property type="protein sequence ID" value="BAC18688.1"/>
    <property type="molecule type" value="Genomic_DNA"/>
</dbReference>
<dbReference type="RefSeq" id="WP_011075654.1">
    <property type="nucleotide sequence ID" value="NC_004369.1"/>
</dbReference>
<dbReference type="SMR" id="Q8FPA7"/>
<dbReference type="STRING" id="196164.gene:10742306"/>
<dbReference type="KEGG" id="cef:CE1878"/>
<dbReference type="eggNOG" id="COG0532">
    <property type="taxonomic scope" value="Bacteria"/>
</dbReference>
<dbReference type="HOGENOM" id="CLU_006301_9_0_11"/>
<dbReference type="Proteomes" id="UP000001409">
    <property type="component" value="Chromosome"/>
</dbReference>
<dbReference type="GO" id="GO:0005829">
    <property type="term" value="C:cytosol"/>
    <property type="evidence" value="ECO:0007669"/>
    <property type="project" value="TreeGrafter"/>
</dbReference>
<dbReference type="GO" id="GO:0005525">
    <property type="term" value="F:GTP binding"/>
    <property type="evidence" value="ECO:0007669"/>
    <property type="project" value="UniProtKB-KW"/>
</dbReference>
<dbReference type="GO" id="GO:0003924">
    <property type="term" value="F:GTPase activity"/>
    <property type="evidence" value="ECO:0007669"/>
    <property type="project" value="UniProtKB-UniRule"/>
</dbReference>
<dbReference type="GO" id="GO:0003743">
    <property type="term" value="F:translation initiation factor activity"/>
    <property type="evidence" value="ECO:0007669"/>
    <property type="project" value="UniProtKB-UniRule"/>
</dbReference>
<dbReference type="CDD" id="cd01887">
    <property type="entry name" value="IF2_eIF5B"/>
    <property type="match status" value="1"/>
</dbReference>
<dbReference type="CDD" id="cd03702">
    <property type="entry name" value="IF2_mtIF2_II"/>
    <property type="match status" value="1"/>
</dbReference>
<dbReference type="CDD" id="cd03692">
    <property type="entry name" value="mtIF2_IVc"/>
    <property type="match status" value="1"/>
</dbReference>
<dbReference type="FunFam" id="2.40.30.10:FF:000007">
    <property type="entry name" value="Translation initiation factor IF-2"/>
    <property type="match status" value="1"/>
</dbReference>
<dbReference type="FunFam" id="2.40.30.10:FF:000008">
    <property type="entry name" value="Translation initiation factor IF-2"/>
    <property type="match status" value="1"/>
</dbReference>
<dbReference type="FunFam" id="3.40.50.10050:FF:000001">
    <property type="entry name" value="Translation initiation factor IF-2"/>
    <property type="match status" value="1"/>
</dbReference>
<dbReference type="FunFam" id="3.40.50.300:FF:000019">
    <property type="entry name" value="Translation initiation factor IF-2"/>
    <property type="match status" value="1"/>
</dbReference>
<dbReference type="Gene3D" id="1.10.10.2480">
    <property type="match status" value="1"/>
</dbReference>
<dbReference type="Gene3D" id="3.40.50.300">
    <property type="entry name" value="P-loop containing nucleotide triphosphate hydrolases"/>
    <property type="match status" value="1"/>
</dbReference>
<dbReference type="Gene3D" id="2.40.30.10">
    <property type="entry name" value="Translation factors"/>
    <property type="match status" value="2"/>
</dbReference>
<dbReference type="Gene3D" id="3.40.50.10050">
    <property type="entry name" value="Translation initiation factor IF- 2, domain 3"/>
    <property type="match status" value="1"/>
</dbReference>
<dbReference type="HAMAP" id="MF_00100_B">
    <property type="entry name" value="IF_2_B"/>
    <property type="match status" value="1"/>
</dbReference>
<dbReference type="InterPro" id="IPR053905">
    <property type="entry name" value="EF-G-like_DII"/>
</dbReference>
<dbReference type="InterPro" id="IPR044145">
    <property type="entry name" value="IF2_II"/>
</dbReference>
<dbReference type="InterPro" id="IPR006847">
    <property type="entry name" value="IF2_N"/>
</dbReference>
<dbReference type="InterPro" id="IPR027417">
    <property type="entry name" value="P-loop_NTPase"/>
</dbReference>
<dbReference type="InterPro" id="IPR005225">
    <property type="entry name" value="Small_GTP-bd"/>
</dbReference>
<dbReference type="InterPro" id="IPR000795">
    <property type="entry name" value="T_Tr_GTP-bd_dom"/>
</dbReference>
<dbReference type="InterPro" id="IPR000178">
    <property type="entry name" value="TF_IF2_bacterial-like"/>
</dbReference>
<dbReference type="InterPro" id="IPR015760">
    <property type="entry name" value="TIF_IF2"/>
</dbReference>
<dbReference type="InterPro" id="IPR023115">
    <property type="entry name" value="TIF_IF2_dom3"/>
</dbReference>
<dbReference type="InterPro" id="IPR036925">
    <property type="entry name" value="TIF_IF2_dom3_sf"/>
</dbReference>
<dbReference type="InterPro" id="IPR009000">
    <property type="entry name" value="Transl_B-barrel_sf"/>
</dbReference>
<dbReference type="NCBIfam" id="TIGR00487">
    <property type="entry name" value="IF-2"/>
    <property type="match status" value="1"/>
</dbReference>
<dbReference type="NCBIfam" id="TIGR00231">
    <property type="entry name" value="small_GTP"/>
    <property type="match status" value="1"/>
</dbReference>
<dbReference type="PANTHER" id="PTHR43381:SF5">
    <property type="entry name" value="TR-TYPE G DOMAIN-CONTAINING PROTEIN"/>
    <property type="match status" value="1"/>
</dbReference>
<dbReference type="PANTHER" id="PTHR43381">
    <property type="entry name" value="TRANSLATION INITIATION FACTOR IF-2-RELATED"/>
    <property type="match status" value="1"/>
</dbReference>
<dbReference type="Pfam" id="PF22042">
    <property type="entry name" value="EF-G_D2"/>
    <property type="match status" value="1"/>
</dbReference>
<dbReference type="Pfam" id="PF00009">
    <property type="entry name" value="GTP_EFTU"/>
    <property type="match status" value="1"/>
</dbReference>
<dbReference type="Pfam" id="PF11987">
    <property type="entry name" value="IF-2"/>
    <property type="match status" value="1"/>
</dbReference>
<dbReference type="Pfam" id="PF04760">
    <property type="entry name" value="IF2_N"/>
    <property type="match status" value="2"/>
</dbReference>
<dbReference type="PRINTS" id="PR00315">
    <property type="entry name" value="ELONGATNFCT"/>
</dbReference>
<dbReference type="SMART" id="SM00173">
    <property type="entry name" value="RAS"/>
    <property type="match status" value="1"/>
</dbReference>
<dbReference type="SUPFAM" id="SSF52156">
    <property type="entry name" value="Initiation factor IF2/eIF5b, domain 3"/>
    <property type="match status" value="1"/>
</dbReference>
<dbReference type="SUPFAM" id="SSF52540">
    <property type="entry name" value="P-loop containing nucleoside triphosphate hydrolases"/>
    <property type="match status" value="1"/>
</dbReference>
<dbReference type="SUPFAM" id="SSF50447">
    <property type="entry name" value="Translation proteins"/>
    <property type="match status" value="2"/>
</dbReference>
<dbReference type="PROSITE" id="PS51722">
    <property type="entry name" value="G_TR_2"/>
    <property type="match status" value="1"/>
</dbReference>
<accession>Q8FPA7</accession>
<sequence length="964" mass="100081">MPGKLRVHELAKKLGITSKELLATLKEQGEFVKTASSTIEPPVVKKMQEHYQATGGAKPDTDNKPTPAKPAAKPGAPAPKPGTAQKPTAPTPGAVAAPKPGTAAAKPTPAKPAAPKPTAAKPAPAKPTAPKPATPAFSGPTPGDAAKKAAEDKATPKPGGEAPRPNAMPRPMAKPGPKPGARAPRVANNPFSTGAADRPGPRPGGGGPRPGGGPRPGGAPRPQGGQRSGAPRDGQGGPRGQRPGPGSGGPRPQGGNAAGAASQERQGGGRRPSPAMMPPTPGQMPAKAPGKGGRGGGQGGPGGGSGGFNRGGGGGAGRGGRRGGTAGAFGRPGGAPRRGRKSKRQKRNEYESMQAPNVIGGVRLPDGRGQTLRLARGASLSDFADKIGADAAALVQALFNLGEMVTATASVSDETLMLLGDEMNFKVEVVSPEDEDRELLESFDLQFGEDIGDEQDLAKRPPVVTVMGHVDHGKTRLLDTIRKANVGSGEAGGITQGIGAYQVKVEVEDDLRTITFLDTPGHEAFTAMRARGAKSTDIAVLVVAADDGVMPQTIEAINHAKAADVPIVVAVNKIDKPDASPEKIRGQLTEYGLVPEEYGGDTIFVDISAKQGTNIDELLASVCLTADAELDLVANPDMDAQGVAIEAHLDRGRGPVATVIVQRGTLRVGDSIVVGDTYGRVRRMVDEYGRDVDEAGPSRPVQVQGLNGVPGAGDNLLVVEDDRIARQIANQRNARKRNALAARSRKRVSLEDLDSVLKETSVLNLILKGDNAGSVEALEEALLKIEMDDEVELNIIDRGVGAVTQTNVTLAAASNAVIIAFNVRAEGKATEEANAEGVDIRYYTIIYRAIEEVEAALKGMLKPIYEEREVGKAEIRAIFKASAIGLIAGCMVEEGKVRRNATARIIRDGNVIASNAKIESLRREKDDVTEVSAGYECGMVLSYPDIAVGDKIEVFEMVEVPRDS</sequence>
<organism>
    <name type="scientific">Corynebacterium efficiens (strain DSM 44549 / YS-314 / AJ 12310 / JCM 11189 / NBRC 100395)</name>
    <dbReference type="NCBI Taxonomy" id="196164"/>
    <lineage>
        <taxon>Bacteria</taxon>
        <taxon>Bacillati</taxon>
        <taxon>Actinomycetota</taxon>
        <taxon>Actinomycetes</taxon>
        <taxon>Mycobacteriales</taxon>
        <taxon>Corynebacteriaceae</taxon>
        <taxon>Corynebacterium</taxon>
    </lineage>
</organism>
<evidence type="ECO:0000250" key="1"/>
<evidence type="ECO:0000255" key="2">
    <source>
        <dbReference type="HAMAP-Rule" id="MF_00100"/>
    </source>
</evidence>
<evidence type="ECO:0000256" key="3">
    <source>
        <dbReference type="SAM" id="MobiDB-lite"/>
    </source>
</evidence>
<reference key="1">
    <citation type="journal article" date="2003" name="Genome Res.">
        <title>Comparative complete genome sequence analysis of the amino acid replacements responsible for the thermostability of Corynebacterium efficiens.</title>
        <authorList>
            <person name="Nishio Y."/>
            <person name="Nakamura Y."/>
            <person name="Kawarabayasi Y."/>
            <person name="Usuda Y."/>
            <person name="Kimura E."/>
            <person name="Sugimoto S."/>
            <person name="Matsui K."/>
            <person name="Yamagishi A."/>
            <person name="Kikuchi H."/>
            <person name="Ikeo K."/>
            <person name="Gojobori T."/>
        </authorList>
    </citation>
    <scope>NUCLEOTIDE SEQUENCE [LARGE SCALE GENOMIC DNA]</scope>
    <source>
        <strain>DSM 44549 / YS-314 / AJ 12310 / JCM 11189 / NBRC 100395</strain>
    </source>
</reference>
<gene>
    <name evidence="2" type="primary">infB</name>
    <name type="ordered locus">CE1878</name>
</gene>
<name>IF2_COREF</name>
<keyword id="KW-0963">Cytoplasm</keyword>
<keyword id="KW-0342">GTP-binding</keyword>
<keyword id="KW-0396">Initiation factor</keyword>
<keyword id="KW-0547">Nucleotide-binding</keyword>
<keyword id="KW-0648">Protein biosynthesis</keyword>
<keyword id="KW-1185">Reference proteome</keyword>